<name>HIS6_RUMCH</name>
<gene>
    <name evidence="1" type="primary">hisF</name>
    <name type="ordered locus">Ccel_0388</name>
</gene>
<proteinExistence type="inferred from homology"/>
<reference key="1">
    <citation type="submission" date="2009-01" db="EMBL/GenBank/DDBJ databases">
        <title>Complete sequence of Clostridium cellulolyticum H10.</title>
        <authorList>
            <consortium name="US DOE Joint Genome Institute"/>
            <person name="Lucas S."/>
            <person name="Copeland A."/>
            <person name="Lapidus A."/>
            <person name="Glavina del Rio T."/>
            <person name="Dalin E."/>
            <person name="Tice H."/>
            <person name="Bruce D."/>
            <person name="Goodwin L."/>
            <person name="Pitluck S."/>
            <person name="Chertkov O."/>
            <person name="Saunders E."/>
            <person name="Brettin T."/>
            <person name="Detter J.C."/>
            <person name="Han C."/>
            <person name="Larimer F."/>
            <person name="Land M."/>
            <person name="Hauser L."/>
            <person name="Kyrpides N."/>
            <person name="Ivanova N."/>
            <person name="Zhou J."/>
            <person name="Richardson P."/>
        </authorList>
    </citation>
    <scope>NUCLEOTIDE SEQUENCE [LARGE SCALE GENOMIC DNA]</scope>
    <source>
        <strain>ATCC 35319 / DSM 5812 / JCM 6584 / H10</strain>
    </source>
</reference>
<feature type="chain" id="PRO_1000148914" description="Imidazole glycerol phosphate synthase subunit HisF">
    <location>
        <begin position="1"/>
        <end position="253"/>
    </location>
</feature>
<feature type="active site" evidence="1">
    <location>
        <position position="11"/>
    </location>
</feature>
<feature type="active site" evidence="1">
    <location>
        <position position="130"/>
    </location>
</feature>
<protein>
    <recommendedName>
        <fullName evidence="1">Imidazole glycerol phosphate synthase subunit HisF</fullName>
        <ecNumber evidence="1">4.3.2.10</ecNumber>
    </recommendedName>
    <alternativeName>
        <fullName evidence="1">IGP synthase cyclase subunit</fullName>
    </alternativeName>
    <alternativeName>
        <fullName evidence="1">IGP synthase subunit HisF</fullName>
    </alternativeName>
    <alternativeName>
        <fullName evidence="1">ImGP synthase subunit HisF</fullName>
        <shortName evidence="1">IGPS subunit HisF</shortName>
    </alternativeName>
</protein>
<evidence type="ECO:0000255" key="1">
    <source>
        <dbReference type="HAMAP-Rule" id="MF_01013"/>
    </source>
</evidence>
<sequence length="253" mass="27244">MLTKRIIPCLDVHAGRVVKGVQFVNIIDAGDPVEAAAFYDKAGADELTFLDITASSDARSIMLDVVSRVAEQVFIPFTVGGGIRTAEDFRRILKAGADKVGVNSAALKRPELISEAAWKFGSQCVVLAIDAKKRADGSGWDTYLNGGRVNTGKDAVEWAIEAEKLGAGEILLTSMDKDGTKDGYDIELTRTVSENVKIPVIASGGAGKMEHFKDALVDGKADAVLAASLFHFREMEIRDLKGYLKNNGIEIRL</sequence>
<dbReference type="EC" id="4.3.2.10" evidence="1"/>
<dbReference type="EMBL" id="CP001348">
    <property type="protein sequence ID" value="ACL74773.1"/>
    <property type="molecule type" value="Genomic_DNA"/>
</dbReference>
<dbReference type="RefSeq" id="WP_012634836.1">
    <property type="nucleotide sequence ID" value="NC_011898.1"/>
</dbReference>
<dbReference type="SMR" id="B8I5V6"/>
<dbReference type="STRING" id="394503.Ccel_0388"/>
<dbReference type="KEGG" id="cce:Ccel_0388"/>
<dbReference type="eggNOG" id="COG0107">
    <property type="taxonomic scope" value="Bacteria"/>
</dbReference>
<dbReference type="HOGENOM" id="CLU_048577_4_0_9"/>
<dbReference type="OrthoDB" id="9781903at2"/>
<dbReference type="UniPathway" id="UPA00031">
    <property type="reaction ID" value="UER00010"/>
</dbReference>
<dbReference type="Proteomes" id="UP000001349">
    <property type="component" value="Chromosome"/>
</dbReference>
<dbReference type="GO" id="GO:0005737">
    <property type="term" value="C:cytoplasm"/>
    <property type="evidence" value="ECO:0007669"/>
    <property type="project" value="UniProtKB-SubCell"/>
</dbReference>
<dbReference type="GO" id="GO:0000107">
    <property type="term" value="F:imidazoleglycerol-phosphate synthase activity"/>
    <property type="evidence" value="ECO:0007669"/>
    <property type="project" value="UniProtKB-UniRule"/>
</dbReference>
<dbReference type="GO" id="GO:0016829">
    <property type="term" value="F:lyase activity"/>
    <property type="evidence" value="ECO:0007669"/>
    <property type="project" value="UniProtKB-KW"/>
</dbReference>
<dbReference type="GO" id="GO:0000105">
    <property type="term" value="P:L-histidine biosynthetic process"/>
    <property type="evidence" value="ECO:0007669"/>
    <property type="project" value="UniProtKB-UniRule"/>
</dbReference>
<dbReference type="CDD" id="cd04731">
    <property type="entry name" value="HisF"/>
    <property type="match status" value="1"/>
</dbReference>
<dbReference type="FunFam" id="3.20.20.70:FF:000006">
    <property type="entry name" value="Imidazole glycerol phosphate synthase subunit HisF"/>
    <property type="match status" value="1"/>
</dbReference>
<dbReference type="Gene3D" id="3.20.20.70">
    <property type="entry name" value="Aldolase class I"/>
    <property type="match status" value="1"/>
</dbReference>
<dbReference type="HAMAP" id="MF_01013">
    <property type="entry name" value="HisF"/>
    <property type="match status" value="1"/>
</dbReference>
<dbReference type="InterPro" id="IPR013785">
    <property type="entry name" value="Aldolase_TIM"/>
</dbReference>
<dbReference type="InterPro" id="IPR006062">
    <property type="entry name" value="His_biosynth"/>
</dbReference>
<dbReference type="InterPro" id="IPR004651">
    <property type="entry name" value="HisF"/>
</dbReference>
<dbReference type="InterPro" id="IPR050064">
    <property type="entry name" value="IGPS_HisA/HisF"/>
</dbReference>
<dbReference type="InterPro" id="IPR011060">
    <property type="entry name" value="RibuloseP-bd_barrel"/>
</dbReference>
<dbReference type="NCBIfam" id="TIGR00735">
    <property type="entry name" value="hisF"/>
    <property type="match status" value="1"/>
</dbReference>
<dbReference type="PANTHER" id="PTHR21235:SF2">
    <property type="entry name" value="IMIDAZOLE GLYCEROL PHOSPHATE SYNTHASE HISHF"/>
    <property type="match status" value="1"/>
</dbReference>
<dbReference type="PANTHER" id="PTHR21235">
    <property type="entry name" value="IMIDAZOLE GLYCEROL PHOSPHATE SYNTHASE SUBUNIT HISF/H IGP SYNTHASE SUBUNIT HISF/H"/>
    <property type="match status" value="1"/>
</dbReference>
<dbReference type="Pfam" id="PF00977">
    <property type="entry name" value="His_biosynth"/>
    <property type="match status" value="1"/>
</dbReference>
<dbReference type="SUPFAM" id="SSF51366">
    <property type="entry name" value="Ribulose-phoshate binding barrel"/>
    <property type="match status" value="1"/>
</dbReference>
<comment type="function">
    <text evidence="1">IGPS catalyzes the conversion of PRFAR and glutamine to IGP, AICAR and glutamate. The HisF subunit catalyzes the cyclization activity that produces IGP and AICAR from PRFAR using the ammonia provided by the HisH subunit.</text>
</comment>
<comment type="catalytic activity">
    <reaction evidence="1">
        <text>5-[(5-phospho-1-deoxy-D-ribulos-1-ylimino)methylamino]-1-(5-phospho-beta-D-ribosyl)imidazole-4-carboxamide + L-glutamine = D-erythro-1-(imidazol-4-yl)glycerol 3-phosphate + 5-amino-1-(5-phospho-beta-D-ribosyl)imidazole-4-carboxamide + L-glutamate + H(+)</text>
        <dbReference type="Rhea" id="RHEA:24793"/>
        <dbReference type="ChEBI" id="CHEBI:15378"/>
        <dbReference type="ChEBI" id="CHEBI:29985"/>
        <dbReference type="ChEBI" id="CHEBI:58278"/>
        <dbReference type="ChEBI" id="CHEBI:58359"/>
        <dbReference type="ChEBI" id="CHEBI:58475"/>
        <dbReference type="ChEBI" id="CHEBI:58525"/>
        <dbReference type="EC" id="4.3.2.10"/>
    </reaction>
</comment>
<comment type="pathway">
    <text evidence="1">Amino-acid biosynthesis; L-histidine biosynthesis; L-histidine from 5-phospho-alpha-D-ribose 1-diphosphate: step 5/9.</text>
</comment>
<comment type="subunit">
    <text evidence="1">Heterodimer of HisH and HisF.</text>
</comment>
<comment type="subcellular location">
    <subcellularLocation>
        <location evidence="1">Cytoplasm</location>
    </subcellularLocation>
</comment>
<comment type="similarity">
    <text evidence="1">Belongs to the HisA/HisF family.</text>
</comment>
<keyword id="KW-0028">Amino-acid biosynthesis</keyword>
<keyword id="KW-0963">Cytoplasm</keyword>
<keyword id="KW-0368">Histidine biosynthesis</keyword>
<keyword id="KW-0456">Lyase</keyword>
<keyword id="KW-1185">Reference proteome</keyword>
<organism>
    <name type="scientific">Ruminiclostridium cellulolyticum (strain ATCC 35319 / DSM 5812 / JCM 6584 / H10)</name>
    <name type="common">Clostridium cellulolyticum</name>
    <dbReference type="NCBI Taxonomy" id="394503"/>
    <lineage>
        <taxon>Bacteria</taxon>
        <taxon>Bacillati</taxon>
        <taxon>Bacillota</taxon>
        <taxon>Clostridia</taxon>
        <taxon>Eubacteriales</taxon>
        <taxon>Oscillospiraceae</taxon>
        <taxon>Ruminiclostridium</taxon>
    </lineage>
</organism>
<accession>B8I5V6</accession>